<sequence>MASTADFKNGLVLNIDGQLWQITEFQHVKPGKGPAFVRTKLKNVLSGKVVDKTFNAGVKVETATVDRRDTTYLYRDGDSFVFMDSQDYEQHHLSPELVGDAHRFLLEGMTVQVAFNEGAALYIELPVSVELEVTHTEPGLQGDRSSAGTKPATVETGAEIQVPLFINTGDRLKVDTRDASYLGRVNG</sequence>
<evidence type="ECO:0000255" key="1">
    <source>
        <dbReference type="HAMAP-Rule" id="MF_00141"/>
    </source>
</evidence>
<reference key="1">
    <citation type="journal article" date="2009" name="PLoS ONE">
        <title>Non mycobacterial virulence genes in the genome of the emerging pathogen Mycobacterium abscessus.</title>
        <authorList>
            <person name="Ripoll F."/>
            <person name="Pasek S."/>
            <person name="Schenowitz C."/>
            <person name="Dossat C."/>
            <person name="Barbe V."/>
            <person name="Rottman M."/>
            <person name="Macheras E."/>
            <person name="Heym B."/>
            <person name="Herrmann J.L."/>
            <person name="Daffe M."/>
            <person name="Brosch R."/>
            <person name="Risler J.L."/>
            <person name="Gaillard J.L."/>
        </authorList>
    </citation>
    <scope>NUCLEOTIDE SEQUENCE [LARGE SCALE GENOMIC DNA]</scope>
    <source>
        <strain>ATCC 19977 / DSM 44196 / CCUG 20993 / CIP 104536 / JCM 13569 / NCTC 13031 / TMC 1543 / L948</strain>
    </source>
</reference>
<name>EFP_MYCA9</name>
<feature type="chain" id="PRO_1000096178" description="Elongation factor P">
    <location>
        <begin position="1"/>
        <end position="187"/>
    </location>
</feature>
<keyword id="KW-0963">Cytoplasm</keyword>
<keyword id="KW-0251">Elongation factor</keyword>
<keyword id="KW-0648">Protein biosynthesis</keyword>
<keyword id="KW-1185">Reference proteome</keyword>
<accession>B1MCE5</accession>
<gene>
    <name evidence="1" type="primary">efp</name>
    <name type="ordered locus">MAB_2837c</name>
</gene>
<proteinExistence type="inferred from homology"/>
<organism>
    <name type="scientific">Mycobacteroides abscessus (strain ATCC 19977 / DSM 44196 / CCUG 20993 / CIP 104536 / JCM 13569 / NCTC 13031 / TMC 1543 / L948)</name>
    <name type="common">Mycobacterium abscessus</name>
    <dbReference type="NCBI Taxonomy" id="561007"/>
    <lineage>
        <taxon>Bacteria</taxon>
        <taxon>Bacillati</taxon>
        <taxon>Actinomycetota</taxon>
        <taxon>Actinomycetes</taxon>
        <taxon>Mycobacteriales</taxon>
        <taxon>Mycobacteriaceae</taxon>
        <taxon>Mycobacteroides</taxon>
        <taxon>Mycobacteroides abscessus</taxon>
    </lineage>
</organism>
<protein>
    <recommendedName>
        <fullName evidence="1">Elongation factor P</fullName>
        <shortName evidence="1">EF-P</shortName>
    </recommendedName>
</protein>
<comment type="function">
    <text evidence="1">Involved in peptide bond synthesis. Stimulates efficient translation and peptide-bond synthesis on native or reconstituted 70S ribosomes in vitro. Probably functions indirectly by altering the affinity of the ribosome for aminoacyl-tRNA, thus increasing their reactivity as acceptors for peptidyl transferase.</text>
</comment>
<comment type="pathway">
    <text evidence="1">Protein biosynthesis; polypeptide chain elongation.</text>
</comment>
<comment type="subcellular location">
    <subcellularLocation>
        <location evidence="1">Cytoplasm</location>
    </subcellularLocation>
</comment>
<comment type="similarity">
    <text evidence="1">Belongs to the elongation factor P family.</text>
</comment>
<dbReference type="EMBL" id="CU458896">
    <property type="protein sequence ID" value="CAM62916.1"/>
    <property type="molecule type" value="Genomic_DNA"/>
</dbReference>
<dbReference type="RefSeq" id="WP_005076127.1">
    <property type="nucleotide sequence ID" value="NZ_MLCG01000003.1"/>
</dbReference>
<dbReference type="SMR" id="B1MCE5"/>
<dbReference type="GeneID" id="93379768"/>
<dbReference type="KEGG" id="mab:MAB_2837c"/>
<dbReference type="UniPathway" id="UPA00345"/>
<dbReference type="Proteomes" id="UP000007137">
    <property type="component" value="Chromosome"/>
</dbReference>
<dbReference type="GO" id="GO:0005737">
    <property type="term" value="C:cytoplasm"/>
    <property type="evidence" value="ECO:0007669"/>
    <property type="project" value="UniProtKB-SubCell"/>
</dbReference>
<dbReference type="GO" id="GO:0003746">
    <property type="term" value="F:translation elongation factor activity"/>
    <property type="evidence" value="ECO:0007669"/>
    <property type="project" value="UniProtKB-UniRule"/>
</dbReference>
<dbReference type="GO" id="GO:0043043">
    <property type="term" value="P:peptide biosynthetic process"/>
    <property type="evidence" value="ECO:0007669"/>
    <property type="project" value="InterPro"/>
</dbReference>
<dbReference type="CDD" id="cd04470">
    <property type="entry name" value="S1_EF-P_repeat_1"/>
    <property type="match status" value="1"/>
</dbReference>
<dbReference type="CDD" id="cd05794">
    <property type="entry name" value="S1_EF-P_repeat_2"/>
    <property type="match status" value="1"/>
</dbReference>
<dbReference type="FunFam" id="2.30.30.30:FF:000003">
    <property type="entry name" value="Elongation factor P"/>
    <property type="match status" value="1"/>
</dbReference>
<dbReference type="FunFam" id="2.40.50.140:FF:000004">
    <property type="entry name" value="Elongation factor P"/>
    <property type="match status" value="1"/>
</dbReference>
<dbReference type="FunFam" id="2.40.50.140:FF:000009">
    <property type="entry name" value="Elongation factor P"/>
    <property type="match status" value="1"/>
</dbReference>
<dbReference type="Gene3D" id="2.30.30.30">
    <property type="match status" value="1"/>
</dbReference>
<dbReference type="Gene3D" id="2.40.50.140">
    <property type="entry name" value="Nucleic acid-binding proteins"/>
    <property type="match status" value="2"/>
</dbReference>
<dbReference type="HAMAP" id="MF_00141">
    <property type="entry name" value="EF_P"/>
    <property type="match status" value="1"/>
</dbReference>
<dbReference type="InterPro" id="IPR015365">
    <property type="entry name" value="Elong-fact-P_C"/>
</dbReference>
<dbReference type="InterPro" id="IPR012340">
    <property type="entry name" value="NA-bd_OB-fold"/>
</dbReference>
<dbReference type="InterPro" id="IPR014722">
    <property type="entry name" value="Rib_uL2_dom2"/>
</dbReference>
<dbReference type="InterPro" id="IPR020599">
    <property type="entry name" value="Transl_elong_fac_P/YeiP"/>
</dbReference>
<dbReference type="InterPro" id="IPR013185">
    <property type="entry name" value="Transl_elong_KOW-like"/>
</dbReference>
<dbReference type="InterPro" id="IPR001059">
    <property type="entry name" value="Transl_elong_P/YeiP_cen"/>
</dbReference>
<dbReference type="InterPro" id="IPR013852">
    <property type="entry name" value="Transl_elong_P/YeiP_CS"/>
</dbReference>
<dbReference type="InterPro" id="IPR011768">
    <property type="entry name" value="Transl_elongation_fac_P"/>
</dbReference>
<dbReference type="InterPro" id="IPR008991">
    <property type="entry name" value="Translation_prot_SH3-like_sf"/>
</dbReference>
<dbReference type="NCBIfam" id="TIGR00038">
    <property type="entry name" value="efp"/>
    <property type="match status" value="1"/>
</dbReference>
<dbReference type="NCBIfam" id="NF001810">
    <property type="entry name" value="PRK00529.1"/>
    <property type="match status" value="1"/>
</dbReference>
<dbReference type="PANTHER" id="PTHR30053">
    <property type="entry name" value="ELONGATION FACTOR P"/>
    <property type="match status" value="1"/>
</dbReference>
<dbReference type="PANTHER" id="PTHR30053:SF12">
    <property type="entry name" value="ELONGATION FACTOR P (EF-P) FAMILY PROTEIN"/>
    <property type="match status" value="1"/>
</dbReference>
<dbReference type="Pfam" id="PF01132">
    <property type="entry name" value="EFP"/>
    <property type="match status" value="1"/>
</dbReference>
<dbReference type="Pfam" id="PF08207">
    <property type="entry name" value="EFP_N"/>
    <property type="match status" value="1"/>
</dbReference>
<dbReference type="Pfam" id="PF09285">
    <property type="entry name" value="Elong-fact-P_C"/>
    <property type="match status" value="1"/>
</dbReference>
<dbReference type="PIRSF" id="PIRSF005901">
    <property type="entry name" value="EF-P"/>
    <property type="match status" value="1"/>
</dbReference>
<dbReference type="SMART" id="SM01185">
    <property type="entry name" value="EFP"/>
    <property type="match status" value="1"/>
</dbReference>
<dbReference type="SMART" id="SM00841">
    <property type="entry name" value="Elong-fact-P_C"/>
    <property type="match status" value="1"/>
</dbReference>
<dbReference type="SUPFAM" id="SSF50249">
    <property type="entry name" value="Nucleic acid-binding proteins"/>
    <property type="match status" value="2"/>
</dbReference>
<dbReference type="SUPFAM" id="SSF50104">
    <property type="entry name" value="Translation proteins SH3-like domain"/>
    <property type="match status" value="1"/>
</dbReference>
<dbReference type="PROSITE" id="PS01275">
    <property type="entry name" value="EFP"/>
    <property type="match status" value="1"/>
</dbReference>